<comment type="function">
    <text evidence="1">Produces ATP from ADP in the presence of a proton gradient across the membrane.</text>
</comment>
<comment type="subunit">
    <text evidence="1">F-type ATPases have 2 components, CF(1) - the catalytic core - and CF(0) - the membrane proton channel. CF(1) has five subunits: alpha(3), beta(3), gamma(1), delta(1), epsilon(1). CF(0) has three main subunits: a, b and c.</text>
</comment>
<comment type="subcellular location">
    <subcellularLocation>
        <location evidence="1">Cell membrane</location>
        <topology evidence="1">Peripheral membrane protein</topology>
    </subcellularLocation>
</comment>
<comment type="similarity">
    <text evidence="1">Belongs to the ATPase epsilon chain family.</text>
</comment>
<dbReference type="EMBL" id="AM946015">
    <property type="protein sequence ID" value="CAR41562.1"/>
    <property type="molecule type" value="Genomic_DNA"/>
</dbReference>
<dbReference type="RefSeq" id="WP_012658191.1">
    <property type="nucleotide sequence ID" value="NC_012004.1"/>
</dbReference>
<dbReference type="SMR" id="B9DRT7"/>
<dbReference type="STRING" id="218495.SUB0673"/>
<dbReference type="KEGG" id="sub:SUB0673"/>
<dbReference type="eggNOG" id="COG0355">
    <property type="taxonomic scope" value="Bacteria"/>
</dbReference>
<dbReference type="HOGENOM" id="CLU_084338_1_0_9"/>
<dbReference type="OrthoDB" id="9804110at2"/>
<dbReference type="Proteomes" id="UP000000449">
    <property type="component" value="Chromosome"/>
</dbReference>
<dbReference type="GO" id="GO:0005886">
    <property type="term" value="C:plasma membrane"/>
    <property type="evidence" value="ECO:0007669"/>
    <property type="project" value="UniProtKB-SubCell"/>
</dbReference>
<dbReference type="GO" id="GO:0045259">
    <property type="term" value="C:proton-transporting ATP synthase complex"/>
    <property type="evidence" value="ECO:0007669"/>
    <property type="project" value="UniProtKB-KW"/>
</dbReference>
<dbReference type="GO" id="GO:0005524">
    <property type="term" value="F:ATP binding"/>
    <property type="evidence" value="ECO:0007669"/>
    <property type="project" value="UniProtKB-UniRule"/>
</dbReference>
<dbReference type="GO" id="GO:0046933">
    <property type="term" value="F:proton-transporting ATP synthase activity, rotational mechanism"/>
    <property type="evidence" value="ECO:0007669"/>
    <property type="project" value="UniProtKB-UniRule"/>
</dbReference>
<dbReference type="CDD" id="cd12152">
    <property type="entry name" value="F1-ATPase_delta"/>
    <property type="match status" value="1"/>
</dbReference>
<dbReference type="Gene3D" id="1.20.5.440">
    <property type="entry name" value="ATP synthase delta/epsilon subunit, C-terminal domain"/>
    <property type="match status" value="1"/>
</dbReference>
<dbReference type="Gene3D" id="2.60.15.10">
    <property type="entry name" value="F0F1 ATP synthase delta/epsilon subunit, N-terminal"/>
    <property type="match status" value="1"/>
</dbReference>
<dbReference type="HAMAP" id="MF_00530">
    <property type="entry name" value="ATP_synth_epsil_bac"/>
    <property type="match status" value="1"/>
</dbReference>
<dbReference type="InterPro" id="IPR001469">
    <property type="entry name" value="ATP_synth_F1_dsu/esu"/>
</dbReference>
<dbReference type="InterPro" id="IPR020546">
    <property type="entry name" value="ATP_synth_F1_dsu/esu_N"/>
</dbReference>
<dbReference type="InterPro" id="IPR020547">
    <property type="entry name" value="ATP_synth_F1_esu_C"/>
</dbReference>
<dbReference type="InterPro" id="IPR036771">
    <property type="entry name" value="ATPsynth_dsu/esu_N"/>
</dbReference>
<dbReference type="NCBIfam" id="TIGR01216">
    <property type="entry name" value="ATP_synt_epsi"/>
    <property type="match status" value="1"/>
</dbReference>
<dbReference type="NCBIfam" id="NF001846">
    <property type="entry name" value="PRK00571.1-3"/>
    <property type="match status" value="1"/>
</dbReference>
<dbReference type="PANTHER" id="PTHR13822">
    <property type="entry name" value="ATP SYNTHASE DELTA/EPSILON CHAIN"/>
    <property type="match status" value="1"/>
</dbReference>
<dbReference type="PANTHER" id="PTHR13822:SF10">
    <property type="entry name" value="ATP SYNTHASE EPSILON CHAIN, CHLOROPLASTIC"/>
    <property type="match status" value="1"/>
</dbReference>
<dbReference type="Pfam" id="PF00401">
    <property type="entry name" value="ATP-synt_DE"/>
    <property type="match status" value="1"/>
</dbReference>
<dbReference type="Pfam" id="PF02823">
    <property type="entry name" value="ATP-synt_DE_N"/>
    <property type="match status" value="1"/>
</dbReference>
<dbReference type="SUPFAM" id="SSF51344">
    <property type="entry name" value="Epsilon subunit of F1F0-ATP synthase N-terminal domain"/>
    <property type="match status" value="1"/>
</dbReference>
<protein>
    <recommendedName>
        <fullName evidence="1">ATP synthase epsilon chain</fullName>
    </recommendedName>
    <alternativeName>
        <fullName evidence="1">ATP synthase F1 sector epsilon subunit</fullName>
    </alternativeName>
    <alternativeName>
        <fullName evidence="1">F-ATPase epsilon subunit</fullName>
    </alternativeName>
</protein>
<evidence type="ECO:0000255" key="1">
    <source>
        <dbReference type="HAMAP-Rule" id="MF_00530"/>
    </source>
</evidence>
<gene>
    <name evidence="1" type="primary">atpC</name>
    <name type="ordered locus">SUB0673</name>
</gene>
<keyword id="KW-0066">ATP synthesis</keyword>
<keyword id="KW-1003">Cell membrane</keyword>
<keyword id="KW-0139">CF(1)</keyword>
<keyword id="KW-0375">Hydrogen ion transport</keyword>
<keyword id="KW-0406">Ion transport</keyword>
<keyword id="KW-0472">Membrane</keyword>
<keyword id="KW-1185">Reference proteome</keyword>
<keyword id="KW-0813">Transport</keyword>
<feature type="chain" id="PRO_1000146351" description="ATP synthase epsilon chain">
    <location>
        <begin position="1"/>
        <end position="138"/>
    </location>
</feature>
<proteinExistence type="inferred from homology"/>
<sequence>MTQMTVQVVTPDGIKYDHQAKFISVETTDGEMGILPRHINLIAPLVIHEMKIRRTDDDNHVDWVAINGGIIEIKDNVVTIVADSAERSRDIDVSRAERAKLRAEREIEAAKSAHDIDEVQRAQVALRRALNRINVGNK</sequence>
<accession>B9DRT7</accession>
<reference key="1">
    <citation type="journal article" date="2009" name="BMC Genomics">
        <title>Evidence for niche adaptation in the genome of the bovine pathogen Streptococcus uberis.</title>
        <authorList>
            <person name="Ward P.N."/>
            <person name="Holden M.T.G."/>
            <person name="Leigh J.A."/>
            <person name="Lennard N."/>
            <person name="Bignell A."/>
            <person name="Barron A."/>
            <person name="Clark L."/>
            <person name="Quail M.A."/>
            <person name="Woodward J."/>
            <person name="Barrell B.G."/>
            <person name="Egan S.A."/>
            <person name="Field T.R."/>
            <person name="Maskell D."/>
            <person name="Kehoe M."/>
            <person name="Dowson C.G."/>
            <person name="Chanter N."/>
            <person name="Whatmore A.M."/>
            <person name="Bentley S.D."/>
            <person name="Parkhill J."/>
        </authorList>
    </citation>
    <scope>NUCLEOTIDE SEQUENCE [LARGE SCALE GENOMIC DNA]</scope>
    <source>
        <strain>ATCC BAA-854 / 0140J</strain>
    </source>
</reference>
<organism>
    <name type="scientific">Streptococcus uberis (strain ATCC BAA-854 / 0140J)</name>
    <dbReference type="NCBI Taxonomy" id="218495"/>
    <lineage>
        <taxon>Bacteria</taxon>
        <taxon>Bacillati</taxon>
        <taxon>Bacillota</taxon>
        <taxon>Bacilli</taxon>
        <taxon>Lactobacillales</taxon>
        <taxon>Streptococcaceae</taxon>
        <taxon>Streptococcus</taxon>
    </lineage>
</organism>
<name>ATPE_STRU0</name>